<proteinExistence type="inferred from homology"/>
<dbReference type="EMBL" id="BC120046">
    <property type="protein sequence ID" value="AAI20047.1"/>
    <property type="molecule type" value="mRNA"/>
</dbReference>
<dbReference type="RefSeq" id="NP_001108332.1">
    <property type="nucleotide sequence ID" value="NM_001114860.2"/>
</dbReference>
<dbReference type="RefSeq" id="XP_024848075.1">
    <property type="nucleotide sequence ID" value="XM_024992307.2"/>
</dbReference>
<dbReference type="SMR" id="Q0VCR0"/>
<dbReference type="FunCoup" id="Q0VCR0">
    <property type="interactions" value="337"/>
</dbReference>
<dbReference type="STRING" id="9913.ENSBTAP00000037736"/>
<dbReference type="PaxDb" id="9913-ENSBTAP00000037736"/>
<dbReference type="Ensembl" id="ENSBTAT00000037914.3">
    <property type="protein sequence ID" value="ENSBTAP00000037736.2"/>
    <property type="gene ID" value="ENSBTAG00000026624.4"/>
</dbReference>
<dbReference type="GeneID" id="783110"/>
<dbReference type="KEGG" id="bta:783110"/>
<dbReference type="CTD" id="144363"/>
<dbReference type="VEuPathDB" id="HostDB:ENSBTAG00000026624"/>
<dbReference type="VGNC" id="VGNC:28622">
    <property type="gene designation" value="ETFRF1"/>
</dbReference>
<dbReference type="eggNOG" id="ENOG502S4S4">
    <property type="taxonomic scope" value="Eukaryota"/>
</dbReference>
<dbReference type="GeneTree" id="ENSGT00390000001810"/>
<dbReference type="HOGENOM" id="CLU_141157_2_0_1"/>
<dbReference type="InParanoid" id="Q0VCR0"/>
<dbReference type="OMA" id="RAMNQRY"/>
<dbReference type="OrthoDB" id="10258445at2759"/>
<dbReference type="TreeFam" id="TF300251"/>
<dbReference type="Proteomes" id="UP000009136">
    <property type="component" value="Chromosome 5"/>
</dbReference>
<dbReference type="Bgee" id="ENSBTAG00000026624">
    <property type="expression patterns" value="Expressed in cardiac atrium and 106 other cell types or tissues"/>
</dbReference>
<dbReference type="GO" id="GO:0005739">
    <property type="term" value="C:mitochondrion"/>
    <property type="evidence" value="ECO:0000250"/>
    <property type="project" value="UniProtKB"/>
</dbReference>
<dbReference type="GO" id="GO:0004857">
    <property type="term" value="F:enzyme inhibitor activity"/>
    <property type="evidence" value="ECO:0007669"/>
    <property type="project" value="Ensembl"/>
</dbReference>
<dbReference type="GO" id="GO:0090324">
    <property type="term" value="P:negative regulation of oxidative phosphorylation"/>
    <property type="evidence" value="ECO:0007669"/>
    <property type="project" value="InterPro"/>
</dbReference>
<dbReference type="GO" id="GO:0022904">
    <property type="term" value="P:respiratory electron transport chain"/>
    <property type="evidence" value="ECO:0000250"/>
    <property type="project" value="UniProtKB"/>
</dbReference>
<dbReference type="CDD" id="cd20265">
    <property type="entry name" value="Complex1_LYR_ETFRF1_LYRM5"/>
    <property type="match status" value="1"/>
</dbReference>
<dbReference type="InterPro" id="IPR008011">
    <property type="entry name" value="Complex1_LYR_dom"/>
</dbReference>
<dbReference type="InterPro" id="IPR045296">
    <property type="entry name" value="Complex1_LYR_ETFRF1_LYRM5"/>
</dbReference>
<dbReference type="InterPro" id="IPR052000">
    <property type="entry name" value="ETFRF1"/>
</dbReference>
<dbReference type="PANTHER" id="PTHR21024:SF0">
    <property type="entry name" value="ELECTRON TRANSFER FLAVOPROTEIN REGULATORY FACTOR 1"/>
    <property type="match status" value="1"/>
</dbReference>
<dbReference type="PANTHER" id="PTHR21024">
    <property type="entry name" value="GROWTH HORMONE-INDUCIBLE SOLUBLE PROTEIN-RELATED"/>
    <property type="match status" value="1"/>
</dbReference>
<dbReference type="Pfam" id="PF05347">
    <property type="entry name" value="Complex1_LYR"/>
    <property type="match status" value="1"/>
</dbReference>
<gene>
    <name evidence="1" type="primary">ETFRF1</name>
    <name evidence="1" type="synonym">LYRM5</name>
</gene>
<feature type="chain" id="PRO_0000313022" description="Electron transfer flavoprotein regulatory factor 1">
    <location>
        <begin position="1"/>
        <end position="88"/>
    </location>
</feature>
<sequence length="88" mass="10705">MANSLRGEVLNLYKNLLYLGRDYPKGADYFKRRLKNVFLKNKDVKDPEKIKELIERGKFVMKELEALYFLRKYRAMKQRYYSDTNKTK</sequence>
<organism>
    <name type="scientific">Bos taurus</name>
    <name type="common">Bovine</name>
    <dbReference type="NCBI Taxonomy" id="9913"/>
    <lineage>
        <taxon>Eukaryota</taxon>
        <taxon>Metazoa</taxon>
        <taxon>Chordata</taxon>
        <taxon>Craniata</taxon>
        <taxon>Vertebrata</taxon>
        <taxon>Euteleostomi</taxon>
        <taxon>Mammalia</taxon>
        <taxon>Eutheria</taxon>
        <taxon>Laurasiatheria</taxon>
        <taxon>Artiodactyla</taxon>
        <taxon>Ruminantia</taxon>
        <taxon>Pecora</taxon>
        <taxon>Bovidae</taxon>
        <taxon>Bovinae</taxon>
        <taxon>Bos</taxon>
    </lineage>
</organism>
<keyword id="KW-0496">Mitochondrion</keyword>
<keyword id="KW-1185">Reference proteome</keyword>
<comment type="function">
    <text evidence="1">Acts as a regulator of the electron transfer flavoprotein by promoting the removal of flavin from the ETF holoenzyme (composed of ETFA and ETFB).</text>
</comment>
<comment type="subunit">
    <text evidence="1">homotetramer. Interacts with NDUFAB1. Interacts with ETFA. Interacts with ETFB.</text>
</comment>
<comment type="subcellular location">
    <subcellularLocation>
        <location evidence="1">Mitochondrion</location>
    </subcellularLocation>
</comment>
<comment type="similarity">
    <text evidence="2">Belongs to the complex I LYR family.</text>
</comment>
<protein>
    <recommendedName>
        <fullName evidence="1">Electron transfer flavoprotein regulatory factor 1</fullName>
    </recommendedName>
    <alternativeName>
        <fullName evidence="1">LYR motif-containing protein 5</fullName>
    </alternativeName>
</protein>
<evidence type="ECO:0000250" key="1">
    <source>
        <dbReference type="UniProtKB" id="Q6IPR1"/>
    </source>
</evidence>
<evidence type="ECO:0000305" key="2"/>
<name>ETFR1_BOVIN</name>
<reference key="1">
    <citation type="submission" date="2006-08" db="EMBL/GenBank/DDBJ databases">
        <authorList>
            <consortium name="NIH - Mammalian Gene Collection (MGC) project"/>
        </authorList>
    </citation>
    <scope>NUCLEOTIDE SEQUENCE [LARGE SCALE MRNA]</scope>
    <source>
        <strain>Hereford</strain>
        <tissue>Fetal pons</tissue>
    </source>
</reference>
<accession>Q0VCR0</accession>